<dbReference type="EC" id="2.7.2.8" evidence="1"/>
<dbReference type="EMBL" id="CP001359">
    <property type="protein sequence ID" value="ACL63551.1"/>
    <property type="molecule type" value="Genomic_DNA"/>
</dbReference>
<dbReference type="RefSeq" id="WP_012631618.1">
    <property type="nucleotide sequence ID" value="NC_011891.1"/>
</dbReference>
<dbReference type="SMR" id="B8J8V3"/>
<dbReference type="KEGG" id="acp:A2cp1_0192"/>
<dbReference type="HOGENOM" id="CLU_053680_0_0_7"/>
<dbReference type="UniPathway" id="UPA00068">
    <property type="reaction ID" value="UER00107"/>
</dbReference>
<dbReference type="Proteomes" id="UP000007089">
    <property type="component" value="Chromosome"/>
</dbReference>
<dbReference type="GO" id="GO:0005737">
    <property type="term" value="C:cytoplasm"/>
    <property type="evidence" value="ECO:0007669"/>
    <property type="project" value="UniProtKB-SubCell"/>
</dbReference>
<dbReference type="GO" id="GO:0003991">
    <property type="term" value="F:acetylglutamate kinase activity"/>
    <property type="evidence" value="ECO:0007669"/>
    <property type="project" value="UniProtKB-UniRule"/>
</dbReference>
<dbReference type="GO" id="GO:0005524">
    <property type="term" value="F:ATP binding"/>
    <property type="evidence" value="ECO:0007669"/>
    <property type="project" value="UniProtKB-UniRule"/>
</dbReference>
<dbReference type="GO" id="GO:0042450">
    <property type="term" value="P:arginine biosynthetic process via ornithine"/>
    <property type="evidence" value="ECO:0007669"/>
    <property type="project" value="UniProtKB-UniRule"/>
</dbReference>
<dbReference type="GO" id="GO:0006526">
    <property type="term" value="P:L-arginine biosynthetic process"/>
    <property type="evidence" value="ECO:0007669"/>
    <property type="project" value="UniProtKB-UniPathway"/>
</dbReference>
<dbReference type="CDD" id="cd04238">
    <property type="entry name" value="AAK_NAGK-like"/>
    <property type="match status" value="1"/>
</dbReference>
<dbReference type="Gene3D" id="3.40.1160.10">
    <property type="entry name" value="Acetylglutamate kinase-like"/>
    <property type="match status" value="1"/>
</dbReference>
<dbReference type="HAMAP" id="MF_00082">
    <property type="entry name" value="ArgB"/>
    <property type="match status" value="1"/>
</dbReference>
<dbReference type="InterPro" id="IPR036393">
    <property type="entry name" value="AceGlu_kinase-like_sf"/>
</dbReference>
<dbReference type="InterPro" id="IPR004662">
    <property type="entry name" value="AcgluKinase_fam"/>
</dbReference>
<dbReference type="InterPro" id="IPR037528">
    <property type="entry name" value="ArgB"/>
</dbReference>
<dbReference type="InterPro" id="IPR001048">
    <property type="entry name" value="Asp/Glu/Uridylate_kinase"/>
</dbReference>
<dbReference type="NCBIfam" id="TIGR00761">
    <property type="entry name" value="argB"/>
    <property type="match status" value="1"/>
</dbReference>
<dbReference type="PANTHER" id="PTHR23342">
    <property type="entry name" value="N-ACETYLGLUTAMATE SYNTHASE"/>
    <property type="match status" value="1"/>
</dbReference>
<dbReference type="PANTHER" id="PTHR23342:SF0">
    <property type="entry name" value="N-ACETYLGLUTAMATE SYNTHASE, MITOCHONDRIAL"/>
    <property type="match status" value="1"/>
</dbReference>
<dbReference type="Pfam" id="PF00696">
    <property type="entry name" value="AA_kinase"/>
    <property type="match status" value="1"/>
</dbReference>
<dbReference type="PIRSF" id="PIRSF000728">
    <property type="entry name" value="NAGK"/>
    <property type="match status" value="1"/>
</dbReference>
<dbReference type="SUPFAM" id="SSF53633">
    <property type="entry name" value="Carbamate kinase-like"/>
    <property type="match status" value="1"/>
</dbReference>
<sequence>MKTIVLKLGGEIVHSPELDLVARDLRTLVDGWNRVAIVHGGGPQATALQKRLGLETRMVAGRRFTDEATLEVMKYVVAGRLNVDLCGRLLANGVMPVGLHGASGHAIQATRRPPRVMQGAGPEPVDLGLVGDVVGFNLPLLGDLFERRYVPVLACLGCDDAGQALNINGDTVASQLAGALRADALVLVTSTPGVLRDVKDPSSRIPRITRAEFERLVADGTISGGMIPKLEESFEVLRGGARSVVILGKLAPGDLEAALLEPGSAGTVLVAD</sequence>
<protein>
    <recommendedName>
        <fullName evidence="1">Acetylglutamate kinase</fullName>
        <ecNumber evidence="1">2.7.2.8</ecNumber>
    </recommendedName>
    <alternativeName>
        <fullName evidence="1">N-acetyl-L-glutamate 5-phosphotransferase</fullName>
    </alternativeName>
    <alternativeName>
        <fullName evidence="1">NAG kinase</fullName>
        <shortName evidence="1">NAGK</shortName>
    </alternativeName>
</protein>
<name>ARGB_ANAD2</name>
<gene>
    <name evidence="1" type="primary">argB</name>
    <name type="ordered locus">A2cp1_0192</name>
</gene>
<organism>
    <name type="scientific">Anaeromyxobacter dehalogenans (strain 2CP-1 / ATCC BAA-258)</name>
    <dbReference type="NCBI Taxonomy" id="455488"/>
    <lineage>
        <taxon>Bacteria</taxon>
        <taxon>Pseudomonadati</taxon>
        <taxon>Myxococcota</taxon>
        <taxon>Myxococcia</taxon>
        <taxon>Myxococcales</taxon>
        <taxon>Cystobacterineae</taxon>
        <taxon>Anaeromyxobacteraceae</taxon>
        <taxon>Anaeromyxobacter</taxon>
    </lineage>
</organism>
<accession>B8J8V3</accession>
<feature type="chain" id="PRO_1000118330" description="Acetylglutamate kinase">
    <location>
        <begin position="1"/>
        <end position="272"/>
    </location>
</feature>
<feature type="binding site" evidence="1">
    <location>
        <begin position="41"/>
        <end position="42"/>
    </location>
    <ligand>
        <name>substrate</name>
    </ligand>
</feature>
<feature type="binding site" evidence="1">
    <location>
        <position position="63"/>
    </location>
    <ligand>
        <name>substrate</name>
    </ligand>
</feature>
<feature type="binding site" evidence="1">
    <location>
        <position position="166"/>
    </location>
    <ligand>
        <name>substrate</name>
    </ligand>
</feature>
<feature type="site" description="Transition state stabilizer" evidence="1">
    <location>
        <position position="7"/>
    </location>
</feature>
<feature type="site" description="Transition state stabilizer" evidence="1">
    <location>
        <position position="229"/>
    </location>
</feature>
<comment type="function">
    <text evidence="1">Catalyzes the ATP-dependent phosphorylation of N-acetyl-L-glutamate.</text>
</comment>
<comment type="catalytic activity">
    <reaction evidence="1">
        <text>N-acetyl-L-glutamate + ATP = N-acetyl-L-glutamyl 5-phosphate + ADP</text>
        <dbReference type="Rhea" id="RHEA:14629"/>
        <dbReference type="ChEBI" id="CHEBI:30616"/>
        <dbReference type="ChEBI" id="CHEBI:44337"/>
        <dbReference type="ChEBI" id="CHEBI:57936"/>
        <dbReference type="ChEBI" id="CHEBI:456216"/>
        <dbReference type="EC" id="2.7.2.8"/>
    </reaction>
</comment>
<comment type="pathway">
    <text evidence="1">Amino-acid biosynthesis; L-arginine biosynthesis; N(2)-acetyl-L-ornithine from L-glutamate: step 2/4.</text>
</comment>
<comment type="subcellular location">
    <subcellularLocation>
        <location evidence="1">Cytoplasm</location>
    </subcellularLocation>
</comment>
<comment type="similarity">
    <text evidence="1">Belongs to the acetylglutamate kinase family. ArgB subfamily.</text>
</comment>
<keyword id="KW-0028">Amino-acid biosynthesis</keyword>
<keyword id="KW-0055">Arginine biosynthesis</keyword>
<keyword id="KW-0067">ATP-binding</keyword>
<keyword id="KW-0963">Cytoplasm</keyword>
<keyword id="KW-0418">Kinase</keyword>
<keyword id="KW-0547">Nucleotide-binding</keyword>
<keyword id="KW-0808">Transferase</keyword>
<reference key="1">
    <citation type="submission" date="2009-01" db="EMBL/GenBank/DDBJ databases">
        <title>Complete sequence of Anaeromyxobacter dehalogenans 2CP-1.</title>
        <authorList>
            <person name="Lucas S."/>
            <person name="Copeland A."/>
            <person name="Lapidus A."/>
            <person name="Glavina del Rio T."/>
            <person name="Dalin E."/>
            <person name="Tice H."/>
            <person name="Bruce D."/>
            <person name="Goodwin L."/>
            <person name="Pitluck S."/>
            <person name="Saunders E."/>
            <person name="Brettin T."/>
            <person name="Detter J.C."/>
            <person name="Han C."/>
            <person name="Larimer F."/>
            <person name="Land M."/>
            <person name="Hauser L."/>
            <person name="Kyrpides N."/>
            <person name="Ovchinnikova G."/>
            <person name="Beliaev A.S."/>
            <person name="Richardson P."/>
        </authorList>
    </citation>
    <scope>NUCLEOTIDE SEQUENCE [LARGE SCALE GENOMIC DNA]</scope>
    <source>
        <strain>2CP-1 / ATCC BAA-258</strain>
    </source>
</reference>
<evidence type="ECO:0000255" key="1">
    <source>
        <dbReference type="HAMAP-Rule" id="MF_00082"/>
    </source>
</evidence>
<proteinExistence type="inferred from homology"/>